<keyword id="KW-0328">Glycosyltransferase</keyword>
<keyword id="KW-0472">Membrane</keyword>
<keyword id="KW-1185">Reference proteome</keyword>
<keyword id="KW-0808">Transferase</keyword>
<keyword id="KW-0812">Transmembrane</keyword>
<keyword id="KW-1133">Transmembrane helix</keyword>
<sequence length="507" mass="58572">MCRRNVILVFCASFALFFTFIIFGRYPGGRFAVLYENATGPSETRPLKAFISSSYFYPTSKSLGDNALALVMSVNLVQTPSFLTPYFQEIVISAENATSSAVVSTPFFRIIPHEQCQIMTIFATAQLLPNVKRIQMVSHDGLTDIPFSPPSAIKRDVVMCIAPLFVSEQWQNFLFAVHIYKKYGGFMNLYLISTINTFFAVMKEYEKEGYMKVQPWPKVNFPGVPMDIADTHGQIEFRSQTAAQTDCLLQYKESAQYLAFLDLDDVLIPRIAPTYIEEFQRIIKGKKPLAYFLYHKENYEAFVTPNSSQFSLKNMFGSLKCRNFRETGKSVIDPQNANYTWLHYPPVLVNGLEKYEVEENVITHLKTINWVEDEVKTGNGTIIEPMYYDNSSATIISSKDIKDIEDDLQRMRNKPEIKKLFAELPKIRYYSDLVLKCYNEKFYDYFYSGRYEKITCPGPQYCDFKQHPDITCMRVNATHIERETLSPVTYYYAKDPYFTDKMGCYAH</sequence>
<dbReference type="EC" id="2.4.1.-" evidence="2"/>
<dbReference type="EMBL" id="FO080768">
    <property type="protein sequence ID" value="CCD66566.1"/>
    <property type="molecule type" value="Genomic_DNA"/>
</dbReference>
<dbReference type="PIR" id="T34152">
    <property type="entry name" value="T34152"/>
</dbReference>
<dbReference type="RefSeq" id="NP_501294.1">
    <property type="nucleotide sequence ID" value="NM_068893.3"/>
</dbReference>
<dbReference type="FunCoup" id="Q18416">
    <property type="interactions" value="15"/>
</dbReference>
<dbReference type="PaxDb" id="6239-C33H5.2"/>
<dbReference type="EnsemblMetazoa" id="C33H5.2.1">
    <property type="protein sequence ID" value="C33H5.2.1"/>
    <property type="gene ID" value="WBGene00016371"/>
</dbReference>
<dbReference type="GeneID" id="183184"/>
<dbReference type="KEGG" id="cel:CELE_C33H5.2"/>
<dbReference type="UCSC" id="C33H5.2">
    <property type="organism name" value="c. elegans"/>
</dbReference>
<dbReference type="AGR" id="WB:WBGene00016371"/>
<dbReference type="CTD" id="183184"/>
<dbReference type="WormBase" id="C33H5.2">
    <property type="protein sequence ID" value="CE04146"/>
    <property type="gene ID" value="WBGene00016371"/>
</dbReference>
<dbReference type="eggNOG" id="KOG4735">
    <property type="taxonomic scope" value="Eukaryota"/>
</dbReference>
<dbReference type="GeneTree" id="ENSGT00970000195836"/>
<dbReference type="HOGENOM" id="CLU_028496_1_0_1"/>
<dbReference type="InParanoid" id="Q18416"/>
<dbReference type="OMA" id="VNATHIE"/>
<dbReference type="OrthoDB" id="5809216at2759"/>
<dbReference type="PhylomeDB" id="Q18416"/>
<dbReference type="PRO" id="PR:Q18416"/>
<dbReference type="Proteomes" id="UP000001940">
    <property type="component" value="Chromosome IV"/>
</dbReference>
<dbReference type="GO" id="GO:0016020">
    <property type="term" value="C:membrane"/>
    <property type="evidence" value="ECO:0007669"/>
    <property type="project" value="UniProtKB-SubCell"/>
</dbReference>
<dbReference type="GO" id="GO:0016757">
    <property type="term" value="F:glycosyltransferase activity"/>
    <property type="evidence" value="ECO:0007669"/>
    <property type="project" value="UniProtKB-KW"/>
</dbReference>
<dbReference type="InterPro" id="IPR008166">
    <property type="entry name" value="Glyco_transf_92"/>
</dbReference>
<dbReference type="InterPro" id="IPR052012">
    <property type="entry name" value="GTase_92"/>
</dbReference>
<dbReference type="PANTHER" id="PTHR21645">
    <property type="entry name" value="GLYCOSYLTRANSFERASE FAMILY 92 PROTEIN"/>
    <property type="match status" value="1"/>
</dbReference>
<dbReference type="PANTHER" id="PTHR21645:SF17">
    <property type="entry name" value="GLYCOSYLTRANSFERASE FAMILY 92 PROTEIN-RELATED"/>
    <property type="match status" value="1"/>
</dbReference>
<dbReference type="Pfam" id="PF01697">
    <property type="entry name" value="Glyco_transf_92"/>
    <property type="match status" value="1"/>
</dbReference>
<evidence type="ECO:0000255" key="1"/>
<evidence type="ECO:0000305" key="2"/>
<organism>
    <name type="scientific">Caenorhabditis elegans</name>
    <dbReference type="NCBI Taxonomy" id="6239"/>
    <lineage>
        <taxon>Eukaryota</taxon>
        <taxon>Metazoa</taxon>
        <taxon>Ecdysozoa</taxon>
        <taxon>Nematoda</taxon>
        <taxon>Chromadorea</taxon>
        <taxon>Rhabditida</taxon>
        <taxon>Rhabditina</taxon>
        <taxon>Rhabditomorpha</taxon>
        <taxon>Rhabditoidea</taxon>
        <taxon>Rhabditidae</taxon>
        <taxon>Peloderinae</taxon>
        <taxon>Caenorhabditis</taxon>
    </lineage>
</organism>
<proteinExistence type="inferred from homology"/>
<feature type="chain" id="PRO_0000065220" description="Glycosyltransferase family 92 protein C33H5.2">
    <location>
        <begin position="1"/>
        <end position="507"/>
    </location>
</feature>
<feature type="transmembrane region" description="Helical" evidence="1">
    <location>
        <begin position="6"/>
        <end position="26"/>
    </location>
</feature>
<feature type="domain" description="GT92">
    <location>
        <begin position="155"/>
        <end position="444"/>
    </location>
</feature>
<accession>Q18416</accession>
<name>YY42_CAEEL</name>
<comment type="subcellular location">
    <subcellularLocation>
        <location evidence="2">Membrane</location>
        <topology evidence="2">Single-pass membrane protein</topology>
    </subcellularLocation>
</comment>
<comment type="similarity">
    <text evidence="2">Belongs to the glycosyltransferase 92 family.</text>
</comment>
<reference key="1">
    <citation type="journal article" date="1998" name="Science">
        <title>Genome sequence of the nematode C. elegans: a platform for investigating biology.</title>
        <authorList>
            <consortium name="The C. elegans sequencing consortium"/>
        </authorList>
    </citation>
    <scope>NUCLEOTIDE SEQUENCE [LARGE SCALE GENOMIC DNA]</scope>
    <source>
        <strain>Bristol N2</strain>
    </source>
</reference>
<gene>
    <name type="ORF">C33H5.2</name>
</gene>
<protein>
    <recommendedName>
        <fullName>Glycosyltransferase family 92 protein C33H5.2</fullName>
        <ecNumber evidence="2">2.4.1.-</ecNumber>
    </recommendedName>
</protein>